<reference key="1">
    <citation type="journal article" date="2007" name="BMC Genomics">
        <title>The full-ORF clone resource of the German cDNA consortium.</title>
        <authorList>
            <person name="Bechtel S."/>
            <person name="Rosenfelder H."/>
            <person name="Duda A."/>
            <person name="Schmidt C.P."/>
            <person name="Ernst U."/>
            <person name="Wellenreuther R."/>
            <person name="Mehrle A."/>
            <person name="Schuster C."/>
            <person name="Bahr A."/>
            <person name="Bloecker H."/>
            <person name="Heubner D."/>
            <person name="Hoerlein A."/>
            <person name="Michel G."/>
            <person name="Wedler H."/>
            <person name="Koehrer K."/>
            <person name="Ottenwaelder B."/>
            <person name="Poustka A."/>
            <person name="Wiemann S."/>
            <person name="Schupp I."/>
        </authorList>
    </citation>
    <scope>NUCLEOTIDE SEQUENCE [LARGE SCALE MRNA]</scope>
    <source>
        <tissue>Retina</tissue>
        <tissue>Testis</tissue>
    </source>
</reference>
<reference key="2">
    <citation type="journal article" date="2005" name="Nature">
        <title>Generation and annotation of the DNA sequences of human chromosomes 2 and 4.</title>
        <authorList>
            <person name="Hillier L.W."/>
            <person name="Graves T.A."/>
            <person name="Fulton R.S."/>
            <person name="Fulton L.A."/>
            <person name="Pepin K.H."/>
            <person name="Minx P."/>
            <person name="Wagner-McPherson C."/>
            <person name="Layman D."/>
            <person name="Wylie K."/>
            <person name="Sekhon M."/>
            <person name="Becker M.C."/>
            <person name="Fewell G.A."/>
            <person name="Delehaunty K.D."/>
            <person name="Miner T.L."/>
            <person name="Nash W.E."/>
            <person name="Kremitzki C."/>
            <person name="Oddy L."/>
            <person name="Du H."/>
            <person name="Sun H."/>
            <person name="Bradshaw-Cordum H."/>
            <person name="Ali J."/>
            <person name="Carter J."/>
            <person name="Cordes M."/>
            <person name="Harris A."/>
            <person name="Isak A."/>
            <person name="van Brunt A."/>
            <person name="Nguyen C."/>
            <person name="Du F."/>
            <person name="Courtney L."/>
            <person name="Kalicki J."/>
            <person name="Ozersky P."/>
            <person name="Abbott S."/>
            <person name="Armstrong J."/>
            <person name="Belter E.A."/>
            <person name="Caruso L."/>
            <person name="Cedroni M."/>
            <person name="Cotton M."/>
            <person name="Davidson T."/>
            <person name="Desai A."/>
            <person name="Elliott G."/>
            <person name="Erb T."/>
            <person name="Fronick C."/>
            <person name="Gaige T."/>
            <person name="Haakenson W."/>
            <person name="Haglund K."/>
            <person name="Holmes A."/>
            <person name="Harkins R."/>
            <person name="Kim K."/>
            <person name="Kruchowski S.S."/>
            <person name="Strong C.M."/>
            <person name="Grewal N."/>
            <person name="Goyea E."/>
            <person name="Hou S."/>
            <person name="Levy A."/>
            <person name="Martinka S."/>
            <person name="Mead K."/>
            <person name="McLellan M.D."/>
            <person name="Meyer R."/>
            <person name="Randall-Maher J."/>
            <person name="Tomlinson C."/>
            <person name="Dauphin-Kohlberg S."/>
            <person name="Kozlowicz-Reilly A."/>
            <person name="Shah N."/>
            <person name="Swearengen-Shahid S."/>
            <person name="Snider J."/>
            <person name="Strong J.T."/>
            <person name="Thompson J."/>
            <person name="Yoakum M."/>
            <person name="Leonard S."/>
            <person name="Pearman C."/>
            <person name="Trani L."/>
            <person name="Radionenko M."/>
            <person name="Waligorski J.E."/>
            <person name="Wang C."/>
            <person name="Rock S.M."/>
            <person name="Tin-Wollam A.-M."/>
            <person name="Maupin R."/>
            <person name="Latreille P."/>
            <person name="Wendl M.C."/>
            <person name="Yang S.-P."/>
            <person name="Pohl C."/>
            <person name="Wallis J.W."/>
            <person name="Spieth J."/>
            <person name="Bieri T.A."/>
            <person name="Berkowicz N."/>
            <person name="Nelson J.O."/>
            <person name="Osborne J."/>
            <person name="Ding L."/>
            <person name="Meyer R."/>
            <person name="Sabo A."/>
            <person name="Shotland Y."/>
            <person name="Sinha P."/>
            <person name="Wohldmann P.E."/>
            <person name="Cook L.L."/>
            <person name="Hickenbotham M.T."/>
            <person name="Eldred J."/>
            <person name="Williams D."/>
            <person name="Jones T.A."/>
            <person name="She X."/>
            <person name="Ciccarelli F.D."/>
            <person name="Izaurralde E."/>
            <person name="Taylor J."/>
            <person name="Schmutz J."/>
            <person name="Myers R.M."/>
            <person name="Cox D.R."/>
            <person name="Huang X."/>
            <person name="McPherson J.D."/>
            <person name="Mardis E.R."/>
            <person name="Clifton S.W."/>
            <person name="Warren W.C."/>
            <person name="Chinwalla A.T."/>
            <person name="Eddy S.R."/>
            <person name="Marra M.A."/>
            <person name="Ovcharenko I."/>
            <person name="Furey T.S."/>
            <person name="Miller W."/>
            <person name="Eichler E.E."/>
            <person name="Bork P."/>
            <person name="Suyama M."/>
            <person name="Torrents D."/>
            <person name="Waterston R.H."/>
            <person name="Wilson R.K."/>
        </authorList>
    </citation>
    <scope>NUCLEOTIDE SEQUENCE [LARGE SCALE GENOMIC DNA]</scope>
</reference>
<reference key="3">
    <citation type="journal article" date="2004" name="Genome Res.">
        <title>The status, quality, and expansion of the NIH full-length cDNA project: the Mammalian Gene Collection (MGC).</title>
        <authorList>
            <consortium name="The MGC Project Team"/>
        </authorList>
    </citation>
    <scope>NUCLEOTIDE SEQUENCE [LARGE SCALE MRNA]</scope>
    <source>
        <tissue>Placenta</tissue>
        <tissue>Testis</tissue>
    </source>
</reference>
<reference key="4">
    <citation type="journal article" date="2004" name="Nat. Genet.">
        <title>Complete sequencing and characterization of 21,243 full-length human cDNAs.</title>
        <authorList>
            <person name="Ota T."/>
            <person name="Suzuki Y."/>
            <person name="Nishikawa T."/>
            <person name="Otsuki T."/>
            <person name="Sugiyama T."/>
            <person name="Irie R."/>
            <person name="Wakamatsu A."/>
            <person name="Hayashi K."/>
            <person name="Sato H."/>
            <person name="Nagai K."/>
            <person name="Kimura K."/>
            <person name="Makita H."/>
            <person name="Sekine M."/>
            <person name="Obayashi M."/>
            <person name="Nishi T."/>
            <person name="Shibahara T."/>
            <person name="Tanaka T."/>
            <person name="Ishii S."/>
            <person name="Yamamoto J."/>
            <person name="Saito K."/>
            <person name="Kawai Y."/>
            <person name="Isono Y."/>
            <person name="Nakamura Y."/>
            <person name="Nagahari K."/>
            <person name="Murakami K."/>
            <person name="Yasuda T."/>
            <person name="Iwayanagi T."/>
            <person name="Wagatsuma M."/>
            <person name="Shiratori A."/>
            <person name="Sudo H."/>
            <person name="Hosoiri T."/>
            <person name="Kaku Y."/>
            <person name="Kodaira H."/>
            <person name="Kondo H."/>
            <person name="Sugawara M."/>
            <person name="Takahashi M."/>
            <person name="Kanda K."/>
            <person name="Yokoi T."/>
            <person name="Furuya T."/>
            <person name="Kikkawa E."/>
            <person name="Omura Y."/>
            <person name="Abe K."/>
            <person name="Kamihara K."/>
            <person name="Katsuta N."/>
            <person name="Sato K."/>
            <person name="Tanikawa M."/>
            <person name="Yamazaki M."/>
            <person name="Ninomiya K."/>
            <person name="Ishibashi T."/>
            <person name="Yamashita H."/>
            <person name="Murakawa K."/>
            <person name="Fujimori K."/>
            <person name="Tanai H."/>
            <person name="Kimata M."/>
            <person name="Watanabe M."/>
            <person name="Hiraoka S."/>
            <person name="Chiba Y."/>
            <person name="Ishida S."/>
            <person name="Ono Y."/>
            <person name="Takiguchi S."/>
            <person name="Watanabe S."/>
            <person name="Yosida M."/>
            <person name="Hotuta T."/>
            <person name="Kusano J."/>
            <person name="Kanehori K."/>
            <person name="Takahashi-Fujii A."/>
            <person name="Hara H."/>
            <person name="Tanase T.-O."/>
            <person name="Nomura Y."/>
            <person name="Togiya S."/>
            <person name="Komai F."/>
            <person name="Hara R."/>
            <person name="Takeuchi K."/>
            <person name="Arita M."/>
            <person name="Imose N."/>
            <person name="Musashino K."/>
            <person name="Yuuki H."/>
            <person name="Oshima A."/>
            <person name="Sasaki N."/>
            <person name="Aotsuka S."/>
            <person name="Yoshikawa Y."/>
            <person name="Matsunawa H."/>
            <person name="Ichihara T."/>
            <person name="Shiohata N."/>
            <person name="Sano S."/>
            <person name="Moriya S."/>
            <person name="Momiyama H."/>
            <person name="Satoh N."/>
            <person name="Takami S."/>
            <person name="Terashima Y."/>
            <person name="Suzuki O."/>
            <person name="Nakagawa S."/>
            <person name="Senoh A."/>
            <person name="Mizoguchi H."/>
            <person name="Goto Y."/>
            <person name="Shimizu F."/>
            <person name="Wakebe H."/>
            <person name="Hishigaki H."/>
            <person name="Watanabe T."/>
            <person name="Sugiyama A."/>
            <person name="Takemoto M."/>
            <person name="Kawakami B."/>
            <person name="Yamazaki M."/>
            <person name="Watanabe K."/>
            <person name="Kumagai A."/>
            <person name="Itakura S."/>
            <person name="Fukuzumi Y."/>
            <person name="Fujimori Y."/>
            <person name="Komiyama M."/>
            <person name="Tashiro H."/>
            <person name="Tanigami A."/>
            <person name="Fujiwara T."/>
            <person name="Ono T."/>
            <person name="Yamada K."/>
            <person name="Fujii Y."/>
            <person name="Ozaki K."/>
            <person name="Hirao M."/>
            <person name="Ohmori Y."/>
            <person name="Kawabata A."/>
            <person name="Hikiji T."/>
            <person name="Kobatake N."/>
            <person name="Inagaki H."/>
            <person name="Ikema Y."/>
            <person name="Okamoto S."/>
            <person name="Okitani R."/>
            <person name="Kawakami T."/>
            <person name="Noguchi S."/>
            <person name="Itoh T."/>
            <person name="Shigeta K."/>
            <person name="Senba T."/>
            <person name="Matsumura K."/>
            <person name="Nakajima Y."/>
            <person name="Mizuno T."/>
            <person name="Morinaga M."/>
            <person name="Sasaki M."/>
            <person name="Togashi T."/>
            <person name="Oyama M."/>
            <person name="Hata H."/>
            <person name="Watanabe M."/>
            <person name="Komatsu T."/>
            <person name="Mizushima-Sugano J."/>
            <person name="Satoh T."/>
            <person name="Shirai Y."/>
            <person name="Takahashi Y."/>
            <person name="Nakagawa K."/>
            <person name="Okumura K."/>
            <person name="Nagase T."/>
            <person name="Nomura N."/>
            <person name="Kikuchi H."/>
            <person name="Masuho Y."/>
            <person name="Yamashita R."/>
            <person name="Nakai K."/>
            <person name="Yada T."/>
            <person name="Nakamura Y."/>
            <person name="Ohara O."/>
            <person name="Isogai T."/>
            <person name="Sugano S."/>
        </authorList>
    </citation>
    <scope>NUCLEOTIDE SEQUENCE [LARGE SCALE MRNA] OF 1-782</scope>
    <source>
        <tissue>Teratocarcinoma</tissue>
    </source>
</reference>
<reference key="5">
    <citation type="journal article" date="2002" name="Mol. Biol. Cell">
        <title>Functional proteomic analysis of human nucleolus.</title>
        <authorList>
            <person name="Scherl A."/>
            <person name="Coute Y."/>
            <person name="Deon C."/>
            <person name="Calle A."/>
            <person name="Kindbeiter K."/>
            <person name="Sanchez J.-C."/>
            <person name="Greco A."/>
            <person name="Hochstrasser D.F."/>
            <person name="Diaz J.-J."/>
        </authorList>
    </citation>
    <scope>SUBCELLULAR LOCATION [LARGE SCALE ANALYSIS]</scope>
    <source>
        <tissue>Cervix carcinoma</tissue>
    </source>
</reference>
<reference key="6">
    <citation type="journal article" date="2006" name="Cell">
        <title>Global, in vivo, and site-specific phosphorylation dynamics in signaling networks.</title>
        <authorList>
            <person name="Olsen J.V."/>
            <person name="Blagoev B."/>
            <person name="Gnad F."/>
            <person name="Macek B."/>
            <person name="Kumar C."/>
            <person name="Mortensen P."/>
            <person name="Mann M."/>
        </authorList>
    </citation>
    <scope>PHOSPHORYLATION [LARGE SCALE ANALYSIS] AT SER-779 AND SER-782</scope>
    <scope>IDENTIFICATION BY MASS SPECTROMETRY [LARGE SCALE ANALYSIS]</scope>
    <source>
        <tissue>Cervix carcinoma</tissue>
    </source>
</reference>
<reference key="7">
    <citation type="journal article" date="2007" name="Genes Dev.">
        <title>Recruitment of factors linking transcription and processing of pre-rRNA to NOR chromatin is UBF-dependent and occurs independent of transcription in human cells.</title>
        <authorList>
            <person name="Prieto J.L."/>
            <person name="McStay B."/>
        </authorList>
    </citation>
    <scope>FUNCTION</scope>
    <scope>SUBCELLULAR LOCATION</scope>
    <scope>SUBUNIT</scope>
</reference>
<reference key="8">
    <citation type="journal article" date="2008" name="Mol. Cell">
        <title>Kinase-selective enrichment enables quantitative phosphoproteomics of the kinome across the cell cycle.</title>
        <authorList>
            <person name="Daub H."/>
            <person name="Olsen J.V."/>
            <person name="Bairlein M."/>
            <person name="Gnad F."/>
            <person name="Oppermann F.S."/>
            <person name="Korner R."/>
            <person name="Greff Z."/>
            <person name="Keri G."/>
            <person name="Stemmann O."/>
            <person name="Mann M."/>
        </authorList>
    </citation>
    <scope>IDENTIFICATION BY MASS SPECTROMETRY [LARGE SCALE ANALYSIS]</scope>
    <source>
        <tissue>Cervix carcinoma</tissue>
    </source>
</reference>
<reference key="9">
    <citation type="journal article" date="2008" name="Proc. Natl. Acad. Sci. U.S.A.">
        <title>A quantitative atlas of mitotic phosphorylation.</title>
        <authorList>
            <person name="Dephoure N."/>
            <person name="Zhou C."/>
            <person name="Villen J."/>
            <person name="Beausoleil S.A."/>
            <person name="Bakalarski C.E."/>
            <person name="Elledge S.J."/>
            <person name="Gygi S.P."/>
        </authorList>
    </citation>
    <scope>PHOSPHORYLATION [LARGE SCALE ANALYSIS] AT SER-779; SER-782; SER-796 AND SER-811</scope>
    <scope>IDENTIFICATION BY MASS SPECTROMETRY [LARGE SCALE ANALYSIS]</scope>
    <source>
        <tissue>Cervix carcinoma</tissue>
    </source>
</reference>
<reference key="10">
    <citation type="journal article" date="2009" name="Anal. Chem.">
        <title>Lys-N and trypsin cover complementary parts of the phosphoproteome in a refined SCX-based approach.</title>
        <authorList>
            <person name="Gauci S."/>
            <person name="Helbig A.O."/>
            <person name="Slijper M."/>
            <person name="Krijgsveld J."/>
            <person name="Heck A.J."/>
            <person name="Mohammed S."/>
        </authorList>
    </citation>
    <scope>IDENTIFICATION BY MASS SPECTROMETRY [LARGE SCALE ANALYSIS]</scope>
</reference>
<reference key="11">
    <citation type="journal article" date="2009" name="Sci. Signal.">
        <title>Quantitative phosphoproteomic analysis of T cell receptor signaling reveals system-wide modulation of protein-protein interactions.</title>
        <authorList>
            <person name="Mayya V."/>
            <person name="Lundgren D.H."/>
            <person name="Hwang S.-I."/>
            <person name="Rezaul K."/>
            <person name="Wu L."/>
            <person name="Eng J.K."/>
            <person name="Rodionov V."/>
            <person name="Han D.K."/>
        </authorList>
    </citation>
    <scope>IDENTIFICATION BY MASS SPECTROMETRY [LARGE SCALE ANALYSIS]</scope>
    <source>
        <tissue>Leukemic T-cell</tissue>
    </source>
</reference>
<reference key="12">
    <citation type="journal article" date="2009" name="Science">
        <title>Lysine acetylation targets protein complexes and co-regulates major cellular functions.</title>
        <authorList>
            <person name="Choudhary C."/>
            <person name="Kumar C."/>
            <person name="Gnad F."/>
            <person name="Nielsen M.L."/>
            <person name="Rehman M."/>
            <person name="Walther T.C."/>
            <person name="Olsen J.V."/>
            <person name="Mann M."/>
        </authorList>
    </citation>
    <scope>ACETYLATION [LARGE SCALE ANALYSIS] AT LYS-466</scope>
    <scope>IDENTIFICATION BY MASS SPECTROMETRY [LARGE SCALE ANALYSIS]</scope>
</reference>
<reference key="13">
    <citation type="journal article" date="2010" name="Sci. Signal.">
        <title>Quantitative phosphoproteomics reveals widespread full phosphorylation site occupancy during mitosis.</title>
        <authorList>
            <person name="Olsen J.V."/>
            <person name="Vermeulen M."/>
            <person name="Santamaria A."/>
            <person name="Kumar C."/>
            <person name="Miller M.L."/>
            <person name="Jensen L.J."/>
            <person name="Gnad F."/>
            <person name="Cox J."/>
            <person name="Jensen T.S."/>
            <person name="Nigg E.A."/>
            <person name="Brunak S."/>
            <person name="Mann M."/>
        </authorList>
    </citation>
    <scope>PHOSPHORYLATION [LARGE SCALE ANALYSIS] AT SER-796</scope>
    <scope>IDENTIFICATION BY MASS SPECTROMETRY [LARGE SCALE ANALYSIS]</scope>
    <source>
        <tissue>Cervix carcinoma</tissue>
    </source>
</reference>
<reference key="14">
    <citation type="journal article" date="2011" name="Sci. Signal.">
        <title>System-wide temporal characterization of the proteome and phosphoproteome of human embryonic stem cell differentiation.</title>
        <authorList>
            <person name="Rigbolt K.T."/>
            <person name="Prokhorova T.A."/>
            <person name="Akimov V."/>
            <person name="Henningsen J."/>
            <person name="Johansen P.T."/>
            <person name="Kratchmarova I."/>
            <person name="Kassem M."/>
            <person name="Mann M."/>
            <person name="Olsen J.V."/>
            <person name="Blagoev B."/>
        </authorList>
    </citation>
    <scope>PHOSPHORYLATION [LARGE SCALE ANALYSIS] AT SER-782 AND SER-796</scope>
    <scope>IDENTIFICATION BY MASS SPECTROMETRY [LARGE SCALE ANALYSIS]</scope>
</reference>
<reference key="15">
    <citation type="journal article" date="2012" name="PLoS Genet.">
        <title>NOL11, implicated in the pathogenesis of North American Indian childhood cirrhosis, is required for pre-rRNA transcription and processing.</title>
        <authorList>
            <person name="Freed E.F."/>
            <person name="Prieto J.L."/>
            <person name="McCann K.L."/>
            <person name="McStay B."/>
            <person name="Baserga S.J."/>
        </authorList>
    </citation>
    <scope>POSSIBLE ASSOCIATION IN THE SSU PROCESSOME T-UTP SUBCOMPLEX</scope>
</reference>
<reference key="16">
    <citation type="journal article" date="2012" name="Proc. Natl. Acad. Sci. U.S.A.">
        <title>N-terminal acetylome analyses and functional insights of the N-terminal acetyltransferase NatB.</title>
        <authorList>
            <person name="Van Damme P."/>
            <person name="Lasa M."/>
            <person name="Polevoda B."/>
            <person name="Gazquez C."/>
            <person name="Elosegui-Artola A."/>
            <person name="Kim D.S."/>
            <person name="De Juan-Pardo E."/>
            <person name="Demeyer K."/>
            <person name="Hole K."/>
            <person name="Larrea E."/>
            <person name="Timmerman E."/>
            <person name="Prieto J."/>
            <person name="Arnesen T."/>
            <person name="Sherman F."/>
            <person name="Gevaert K."/>
            <person name="Aldabe R."/>
        </authorList>
    </citation>
    <scope>IDENTIFICATION BY MASS SPECTROMETRY [LARGE SCALE ANALYSIS]</scope>
</reference>
<reference key="17">
    <citation type="journal article" date="2013" name="J. Proteome Res.">
        <title>Toward a comprehensive characterization of a human cancer cell phosphoproteome.</title>
        <authorList>
            <person name="Zhou H."/>
            <person name="Di Palma S."/>
            <person name="Preisinger C."/>
            <person name="Peng M."/>
            <person name="Polat A.N."/>
            <person name="Heck A.J."/>
            <person name="Mohammed S."/>
        </authorList>
    </citation>
    <scope>PHOSPHORYLATION [LARGE SCALE ANALYSIS] AT SER-664; SER-672; SER-796 AND SER-811</scope>
    <scope>IDENTIFICATION BY MASS SPECTROMETRY [LARGE SCALE ANALYSIS]</scope>
    <source>
        <tissue>Cervix carcinoma</tissue>
        <tissue>Erythroleukemia</tissue>
    </source>
</reference>
<reference key="18">
    <citation type="journal article" date="2014" name="Nat. Struct. Mol. Biol.">
        <title>Uncovering global SUMOylation signaling networks in a site-specific manner.</title>
        <authorList>
            <person name="Hendriks I.A."/>
            <person name="D'Souza R.C."/>
            <person name="Yang B."/>
            <person name="Verlaan-de Vries M."/>
            <person name="Mann M."/>
            <person name="Vertegaal A.C."/>
        </authorList>
    </citation>
    <scope>SUMOYLATION [LARGE SCALE ANALYSIS] AT LYS-427</scope>
    <scope>IDENTIFICATION BY MASS SPECTROMETRY [LARGE SCALE ANALYSIS]</scope>
</reference>
<reference key="19">
    <citation type="journal article" date="2017" name="Nat. Struct. Mol. Biol.">
        <title>Site-specific mapping of the human SUMO proteome reveals co-modification with phosphorylation.</title>
        <authorList>
            <person name="Hendriks I.A."/>
            <person name="Lyon D."/>
            <person name="Young C."/>
            <person name="Jensen L.J."/>
            <person name="Vertegaal A.C."/>
            <person name="Nielsen M.L."/>
        </authorList>
    </citation>
    <scope>SUMOYLATION [LARGE SCALE ANALYSIS] AT LYS-123; LYS-427 AND LYS-676</scope>
    <scope>IDENTIFICATION BY MASS SPECTROMETRY [LARGE SCALE ANALYSIS]</scope>
</reference>
<reference evidence="10 11 12" key="20">
    <citation type="journal article" date="2021" name="Science">
        <title>Nucleolar maturation of the human small subunit processome.</title>
        <authorList>
            <person name="Singh S."/>
            <person name="Vanden Broeck A."/>
            <person name="Miller L."/>
            <person name="Chaker-Margot M."/>
            <person name="Klinge S."/>
        </authorList>
    </citation>
    <scope>STRUCTURE BY ELECTRON MICROSCOPY (2.70 ANGSTROMS)</scope>
    <scope>FUNCTION</scope>
    <scope>SUBUNIT</scope>
    <scope>SUBCELLULAR LOCATION</scope>
</reference>
<sequence>MVEEENIRVVRCGGSELNFRRAVFSADSKYIFCVSGDFVKVYSTVTEECVHILHGHRNLVTGIQLNPNNHLQLYSCSLDGTIKLWDYIDGILIKTFIVGCKLHALFTLAQAEDSVFVIVNKEKPDIFQLVSVKLPKSSSQEVEAKELSFVLDYINQSPKCIAFGNEGVYVAAVREFYLSVYFFKKKTTSRFTLSSSRNKKHAKNNFTCVACHPTEDCIASGHMDGKIRLWRNFYDDKKYTYTCLHWHHDMVMDLAFSVTGTSLLSGGRESVLVEWRDATEKNKEFLPRLGATIEHISVSPAGDLFCTSHSDNKIIIIHRNLEASAVIQGLVKDRSIFTGLMIDPRTKALVLNGKPGHLQFYSLQSDKQLYNLDIIQQEYINDYGLIQIELTKAAFGCFGNWLATVEQRQEKETELELQMKLWMYNKKTQGFILNTKINMPHEDCITALCFCNAEKSEQPTLVTASKDGYFKVWILTDDSDIYKKAVGWTCDFVGSYHKYQATNCCFSEDGSLLAVSFEEIVTIWDSVTWELKCTFCQRAGKIRHLCFGRLTCSKYLLGATENGILCCWNLLSCALEWNAKLNVRVMEPDPNSENIAAISQSSVGSDLFVFKPSEPRPLYIQKGISREKVQWGVFVPRDVPESFTSEAYQWLNRSQFYFLTKSQSLLTFSTKSPEEKLTPTSKQLLAEESLPTTPFYFILGKHRQQQDEKLNETLENELVQLPLTENIPAISELLHTPAHVLPSAAFLCSMFVNSLLLSKETKSAKEIPEDVDMEEEKESEDSDEENDFTEKVQDTSNTGLGEDIIHQLSKSEEKELRKFRKIDYSWIAAL</sequence>
<gene>
    <name evidence="9" type="primary">WDR75</name>
    <name type="synonym">UTP17</name>
</gene>
<keyword id="KW-0002">3D-structure</keyword>
<keyword id="KW-0007">Acetylation</keyword>
<keyword id="KW-1017">Isopeptide bond</keyword>
<keyword id="KW-0539">Nucleus</keyword>
<keyword id="KW-0597">Phosphoprotein</keyword>
<keyword id="KW-1267">Proteomics identification</keyword>
<keyword id="KW-1185">Reference proteome</keyword>
<keyword id="KW-0677">Repeat</keyword>
<keyword id="KW-0690">Ribosome biogenesis</keyword>
<keyword id="KW-0698">rRNA processing</keyword>
<keyword id="KW-0804">Transcription</keyword>
<keyword id="KW-0805">Transcription regulation</keyword>
<keyword id="KW-0832">Ubl conjugation</keyword>
<keyword id="KW-0853">WD repeat</keyword>
<organism>
    <name type="scientific">Homo sapiens</name>
    <name type="common">Human</name>
    <dbReference type="NCBI Taxonomy" id="9606"/>
    <lineage>
        <taxon>Eukaryota</taxon>
        <taxon>Metazoa</taxon>
        <taxon>Chordata</taxon>
        <taxon>Craniata</taxon>
        <taxon>Vertebrata</taxon>
        <taxon>Euteleostomi</taxon>
        <taxon>Mammalia</taxon>
        <taxon>Eutheria</taxon>
        <taxon>Euarchontoglires</taxon>
        <taxon>Primates</taxon>
        <taxon>Haplorrhini</taxon>
        <taxon>Catarrhini</taxon>
        <taxon>Hominidae</taxon>
        <taxon>Homo</taxon>
    </lineage>
</organism>
<evidence type="ECO:0000256" key="1">
    <source>
        <dbReference type="SAM" id="MobiDB-lite"/>
    </source>
</evidence>
<evidence type="ECO:0000269" key="2">
    <source>
    </source>
</evidence>
<evidence type="ECO:0000269" key="3">
    <source>
    </source>
</evidence>
<evidence type="ECO:0000269" key="4">
    <source>
    </source>
</evidence>
<evidence type="ECO:0000269" key="5">
    <source>
    </source>
</evidence>
<evidence type="ECO:0000305" key="6"/>
<evidence type="ECO:0000305" key="7">
    <source>
    </source>
</evidence>
<evidence type="ECO:0000305" key="8">
    <source>
    </source>
</evidence>
<evidence type="ECO:0000312" key="9">
    <source>
        <dbReference type="HGNC" id="HGNC:25725"/>
    </source>
</evidence>
<evidence type="ECO:0007744" key="10">
    <source>
        <dbReference type="PDB" id="7MQ8"/>
    </source>
</evidence>
<evidence type="ECO:0007744" key="11">
    <source>
        <dbReference type="PDB" id="7MQ9"/>
    </source>
</evidence>
<evidence type="ECO:0007744" key="12">
    <source>
        <dbReference type="PDB" id="7MQA"/>
    </source>
</evidence>
<evidence type="ECO:0007744" key="13">
    <source>
    </source>
</evidence>
<evidence type="ECO:0007744" key="14">
    <source>
    </source>
</evidence>
<evidence type="ECO:0007744" key="15">
    <source>
    </source>
</evidence>
<evidence type="ECO:0007744" key="16">
    <source>
    </source>
</evidence>
<evidence type="ECO:0007744" key="17">
    <source>
    </source>
</evidence>
<evidence type="ECO:0007744" key="18">
    <source>
    </source>
</evidence>
<evidence type="ECO:0007744" key="19">
    <source>
    </source>
</evidence>
<evidence type="ECO:0007744" key="20">
    <source>
    </source>
</evidence>
<accession>Q8IWA0</accession>
<accession>Q96J10</accession>
<accession>Q9H8U8</accession>
<accession>Q9H9U5</accession>
<accession>Q9H9V8</accession>
<accession>Q9UIX2</accession>
<proteinExistence type="evidence at protein level"/>
<name>WDR75_HUMAN</name>
<protein>
    <recommendedName>
        <fullName>WD repeat-containing protein 75</fullName>
    </recommendedName>
    <alternativeName>
        <fullName>U3 small nucleolar RNA-associated protein 17 homolog</fullName>
    </alternativeName>
</protein>
<dbReference type="EMBL" id="AL122097">
    <property type="protein sequence ID" value="CAB59265.1"/>
    <property type="molecule type" value="mRNA"/>
</dbReference>
<dbReference type="EMBL" id="CR749440">
    <property type="protein sequence ID" value="CAH18278.1"/>
    <property type="molecule type" value="mRNA"/>
</dbReference>
<dbReference type="EMBL" id="AC013439">
    <property type="protein sequence ID" value="AAX93081.1"/>
    <property type="molecule type" value="Genomic_DNA"/>
</dbReference>
<dbReference type="EMBL" id="BC040567">
    <property type="protein sequence ID" value="AAH40567.1"/>
    <property type="molecule type" value="mRNA"/>
</dbReference>
<dbReference type="EMBL" id="BC006816">
    <property type="protein sequence ID" value="AAH06816.1"/>
    <property type="molecule type" value="mRNA"/>
</dbReference>
<dbReference type="EMBL" id="AK022581">
    <property type="protein sequence ID" value="BAB14111.1"/>
    <property type="molecule type" value="mRNA"/>
</dbReference>
<dbReference type="EMBL" id="AK022607">
    <property type="protein sequence ID" value="BAB14126.1"/>
    <property type="molecule type" value="mRNA"/>
</dbReference>
<dbReference type="EMBL" id="AK023276">
    <property type="protein sequence ID" value="BAB14503.1"/>
    <property type="status" value="ALT_INIT"/>
    <property type="molecule type" value="mRNA"/>
</dbReference>
<dbReference type="CCDS" id="CCDS2298.1"/>
<dbReference type="PIR" id="T34531">
    <property type="entry name" value="T34531"/>
</dbReference>
<dbReference type="RefSeq" id="NP_001290025.1">
    <property type="nucleotide sequence ID" value="NM_001303096.1"/>
</dbReference>
<dbReference type="RefSeq" id="NP_115544.1">
    <property type="nucleotide sequence ID" value="NM_032168.3"/>
</dbReference>
<dbReference type="PDB" id="7MQ8">
    <property type="method" value="EM"/>
    <property type="resolution" value="3.60 A"/>
    <property type="chains" value="LH=1-830"/>
</dbReference>
<dbReference type="PDB" id="7MQ9">
    <property type="method" value="EM"/>
    <property type="resolution" value="3.87 A"/>
    <property type="chains" value="LH=1-830"/>
</dbReference>
<dbReference type="PDB" id="7MQA">
    <property type="method" value="EM"/>
    <property type="resolution" value="2.70 A"/>
    <property type="chains" value="LH=1-830"/>
</dbReference>
<dbReference type="PDBsum" id="7MQ8"/>
<dbReference type="PDBsum" id="7MQ9"/>
<dbReference type="PDBsum" id="7MQA"/>
<dbReference type="EMDB" id="EMD-23936"/>
<dbReference type="EMDB" id="EMD-23937"/>
<dbReference type="EMDB" id="EMD-23938"/>
<dbReference type="SMR" id="Q8IWA0"/>
<dbReference type="BioGRID" id="123901">
    <property type="interactions" value="115"/>
</dbReference>
<dbReference type="ComplexPortal" id="CPX-2450">
    <property type="entry name" value="UTP-A complex"/>
</dbReference>
<dbReference type="FunCoup" id="Q8IWA0">
    <property type="interactions" value="3023"/>
</dbReference>
<dbReference type="IntAct" id="Q8IWA0">
    <property type="interactions" value="68"/>
</dbReference>
<dbReference type="MINT" id="Q8IWA0"/>
<dbReference type="STRING" id="9606.ENSP00000314193"/>
<dbReference type="GlyCosmos" id="Q8IWA0">
    <property type="glycosylation" value="1 site, 1 glycan"/>
</dbReference>
<dbReference type="GlyGen" id="Q8IWA0">
    <property type="glycosylation" value="2 sites, 1 O-linked glycan (2 sites)"/>
</dbReference>
<dbReference type="iPTMnet" id="Q8IWA0"/>
<dbReference type="PhosphoSitePlus" id="Q8IWA0"/>
<dbReference type="SwissPalm" id="Q8IWA0"/>
<dbReference type="BioMuta" id="WDR75"/>
<dbReference type="DMDM" id="73622083"/>
<dbReference type="jPOST" id="Q8IWA0"/>
<dbReference type="MassIVE" id="Q8IWA0"/>
<dbReference type="PaxDb" id="9606-ENSP00000314193"/>
<dbReference type="PeptideAtlas" id="Q8IWA0"/>
<dbReference type="ProteomicsDB" id="70825"/>
<dbReference type="Pumba" id="Q8IWA0"/>
<dbReference type="Antibodypedia" id="52112">
    <property type="antibodies" value="23 antibodies from 11 providers"/>
</dbReference>
<dbReference type="DNASU" id="84128"/>
<dbReference type="Ensembl" id="ENST00000314761.9">
    <property type="protein sequence ID" value="ENSP00000314193.4"/>
    <property type="gene ID" value="ENSG00000115368.10"/>
</dbReference>
<dbReference type="GeneID" id="84128"/>
<dbReference type="KEGG" id="hsa:84128"/>
<dbReference type="MANE-Select" id="ENST00000314761.9">
    <property type="protein sequence ID" value="ENSP00000314193.4"/>
    <property type="RefSeq nucleotide sequence ID" value="NM_032168.3"/>
    <property type="RefSeq protein sequence ID" value="NP_115544.1"/>
</dbReference>
<dbReference type="UCSC" id="uc002uql.2">
    <property type="organism name" value="human"/>
</dbReference>
<dbReference type="AGR" id="HGNC:25725"/>
<dbReference type="CTD" id="84128"/>
<dbReference type="DisGeNET" id="84128"/>
<dbReference type="GeneCards" id="WDR75"/>
<dbReference type="HGNC" id="HGNC:25725">
    <property type="gene designation" value="WDR75"/>
</dbReference>
<dbReference type="HPA" id="ENSG00000115368">
    <property type="expression patterns" value="Low tissue specificity"/>
</dbReference>
<dbReference type="MIM" id="620341">
    <property type="type" value="gene"/>
</dbReference>
<dbReference type="neXtProt" id="NX_Q8IWA0"/>
<dbReference type="OpenTargets" id="ENSG00000115368"/>
<dbReference type="PharmGKB" id="PA142670579"/>
<dbReference type="VEuPathDB" id="HostDB:ENSG00000115368"/>
<dbReference type="eggNOG" id="KOG1963">
    <property type="taxonomic scope" value="Eukaryota"/>
</dbReference>
<dbReference type="GeneTree" id="ENSGT00390000006303"/>
<dbReference type="HOGENOM" id="CLU_005417_2_0_1"/>
<dbReference type="InParanoid" id="Q8IWA0"/>
<dbReference type="OMA" id="WILNTRI"/>
<dbReference type="OrthoDB" id="4096at2759"/>
<dbReference type="PAN-GO" id="Q8IWA0">
    <property type="GO annotations" value="4 GO annotations based on evolutionary models"/>
</dbReference>
<dbReference type="PhylomeDB" id="Q8IWA0"/>
<dbReference type="TreeFam" id="TF323469"/>
<dbReference type="PathwayCommons" id="Q8IWA0"/>
<dbReference type="Reactome" id="R-HSA-6790901">
    <property type="pathway name" value="rRNA modification in the nucleus and cytosol"/>
</dbReference>
<dbReference type="Reactome" id="R-HSA-6791226">
    <property type="pathway name" value="Major pathway of rRNA processing in the nucleolus and cytosol"/>
</dbReference>
<dbReference type="SignaLink" id="Q8IWA0"/>
<dbReference type="BioGRID-ORCS" id="84128">
    <property type="hits" value="820 hits in 1165 CRISPR screens"/>
</dbReference>
<dbReference type="CD-CODE" id="91857CE7">
    <property type="entry name" value="Nucleolus"/>
</dbReference>
<dbReference type="ChiTaRS" id="WDR75">
    <property type="organism name" value="human"/>
</dbReference>
<dbReference type="GenomeRNAi" id="84128"/>
<dbReference type="Pharos" id="Q8IWA0">
    <property type="development level" value="Tbio"/>
</dbReference>
<dbReference type="PRO" id="PR:Q8IWA0"/>
<dbReference type="Proteomes" id="UP000005640">
    <property type="component" value="Chromosome 2"/>
</dbReference>
<dbReference type="RNAct" id="Q8IWA0">
    <property type="molecule type" value="protein"/>
</dbReference>
<dbReference type="Bgee" id="ENSG00000115368">
    <property type="expression patterns" value="Expressed in upper arm skin and 190 other cell types or tissues"/>
</dbReference>
<dbReference type="ExpressionAtlas" id="Q8IWA0">
    <property type="expression patterns" value="baseline and differential"/>
</dbReference>
<dbReference type="GO" id="GO:0005730">
    <property type="term" value="C:nucleolus"/>
    <property type="evidence" value="ECO:0000314"/>
    <property type="project" value="UniProtKB"/>
</dbReference>
<dbReference type="GO" id="GO:0005654">
    <property type="term" value="C:nucleoplasm"/>
    <property type="evidence" value="ECO:0000304"/>
    <property type="project" value="Reactome"/>
</dbReference>
<dbReference type="GO" id="GO:0032040">
    <property type="term" value="C:small-subunit processome"/>
    <property type="evidence" value="ECO:0000314"/>
    <property type="project" value="UniProtKB"/>
</dbReference>
<dbReference type="GO" id="GO:0003723">
    <property type="term" value="F:RNA binding"/>
    <property type="evidence" value="ECO:0007005"/>
    <property type="project" value="UniProtKB"/>
</dbReference>
<dbReference type="GO" id="GO:2000234">
    <property type="term" value="P:positive regulation of rRNA processing"/>
    <property type="evidence" value="ECO:0000315"/>
    <property type="project" value="UniProtKB"/>
</dbReference>
<dbReference type="GO" id="GO:0045943">
    <property type="term" value="P:positive regulation of transcription by RNA polymerase I"/>
    <property type="evidence" value="ECO:0000315"/>
    <property type="project" value="UniProtKB"/>
</dbReference>
<dbReference type="GO" id="GO:0042274">
    <property type="term" value="P:ribosomal small subunit biogenesis"/>
    <property type="evidence" value="ECO:0000314"/>
    <property type="project" value="UniProtKB"/>
</dbReference>
<dbReference type="GO" id="GO:0006364">
    <property type="term" value="P:rRNA processing"/>
    <property type="evidence" value="ECO:0007669"/>
    <property type="project" value="UniProtKB-KW"/>
</dbReference>
<dbReference type="FunFam" id="2.130.10.10:FF:000687">
    <property type="entry name" value="WD repeat domain 75"/>
    <property type="match status" value="1"/>
</dbReference>
<dbReference type="FunFam" id="2.130.10.10:FF:000941">
    <property type="entry name" value="WD repeat domain 75"/>
    <property type="match status" value="1"/>
</dbReference>
<dbReference type="FunFam" id="2.130.10.10:FF:000618">
    <property type="entry name" value="WD repeat-containing protein 75"/>
    <property type="match status" value="1"/>
</dbReference>
<dbReference type="Gene3D" id="2.130.10.10">
    <property type="entry name" value="YVTN repeat-like/Quinoprotein amine dehydrogenase"/>
    <property type="match status" value="3"/>
</dbReference>
<dbReference type="InterPro" id="IPR011047">
    <property type="entry name" value="Quinoprotein_ADH-like_sf"/>
</dbReference>
<dbReference type="InterPro" id="IPR015943">
    <property type="entry name" value="WD40/YVTN_repeat-like_dom_sf"/>
</dbReference>
<dbReference type="InterPro" id="IPR001680">
    <property type="entry name" value="WD40_rpt"/>
</dbReference>
<dbReference type="InterPro" id="IPR053826">
    <property type="entry name" value="WDR75"/>
</dbReference>
<dbReference type="PANTHER" id="PTHR44215">
    <property type="entry name" value="WD REPEAT-CONTAINING PROTEIN 75"/>
    <property type="match status" value="1"/>
</dbReference>
<dbReference type="PANTHER" id="PTHR44215:SF1">
    <property type="entry name" value="WD REPEAT-CONTAINING PROTEIN 75"/>
    <property type="match status" value="1"/>
</dbReference>
<dbReference type="Pfam" id="PF23869">
    <property type="entry name" value="Beta-prop_WDR75_1st"/>
    <property type="match status" value="1"/>
</dbReference>
<dbReference type="Pfam" id="PF23769">
    <property type="entry name" value="Beta-prop_WDR75_2nd"/>
    <property type="match status" value="1"/>
</dbReference>
<dbReference type="SMART" id="SM00320">
    <property type="entry name" value="WD40"/>
    <property type="match status" value="8"/>
</dbReference>
<dbReference type="SUPFAM" id="SSF50998">
    <property type="entry name" value="Quinoprotein alcohol dehydrogenase-like"/>
    <property type="match status" value="1"/>
</dbReference>
<dbReference type="PROSITE" id="PS50082">
    <property type="entry name" value="WD_REPEATS_2"/>
    <property type="match status" value="1"/>
</dbReference>
<dbReference type="PROSITE" id="PS50294">
    <property type="entry name" value="WD_REPEATS_REGION"/>
    <property type="match status" value="2"/>
</dbReference>
<feature type="chain" id="PRO_0000051430" description="WD repeat-containing protein 75">
    <location>
        <begin position="1"/>
        <end position="830"/>
    </location>
</feature>
<feature type="repeat" description="WD 1">
    <location>
        <begin position="4"/>
        <end position="43"/>
    </location>
</feature>
<feature type="repeat" description="WD 2">
    <location>
        <begin position="47"/>
        <end position="86"/>
    </location>
</feature>
<feature type="repeat" description="WD 3">
    <location>
        <begin position="90"/>
        <end position="131"/>
    </location>
</feature>
<feature type="repeat" description="WD 4">
    <location>
        <begin position="145"/>
        <end position="184"/>
    </location>
</feature>
<feature type="repeat" description="WD 5">
    <location>
        <begin position="193"/>
        <end position="231"/>
    </location>
</feature>
<feature type="repeat" description="WD 6">
    <location>
        <begin position="237"/>
        <end position="276"/>
    </location>
</feature>
<feature type="repeat" description="WD 7">
    <location>
        <begin position="279"/>
        <end position="318"/>
    </location>
</feature>
<feature type="repeat" description="WD 8">
    <location>
        <begin position="324"/>
        <end position="362"/>
    </location>
</feature>
<feature type="repeat" description="WD 9">
    <location>
        <begin position="376"/>
        <end position="423"/>
    </location>
</feature>
<feature type="repeat" description="WD 10">
    <location>
        <begin position="430"/>
        <end position="474"/>
    </location>
</feature>
<feature type="repeat" description="WD 11">
    <location>
        <begin position="487"/>
        <end position="525"/>
    </location>
</feature>
<feature type="repeat" description="WD 12">
    <location>
        <begin position="529"/>
        <end position="569"/>
    </location>
</feature>
<feature type="repeat" description="WD 13">
    <location>
        <begin position="574"/>
        <end position="611"/>
    </location>
</feature>
<feature type="region of interest" description="Disordered" evidence="1">
    <location>
        <begin position="763"/>
        <end position="806"/>
    </location>
</feature>
<feature type="compositionally biased region" description="Acidic residues" evidence="1">
    <location>
        <begin position="769"/>
        <end position="787"/>
    </location>
</feature>
<feature type="modified residue" description="N6-acetyllysine" evidence="15">
    <location>
        <position position="466"/>
    </location>
</feature>
<feature type="modified residue" description="Phosphoserine" evidence="18">
    <location>
        <position position="664"/>
    </location>
</feature>
<feature type="modified residue" description="Phosphoserine" evidence="18">
    <location>
        <position position="672"/>
    </location>
</feature>
<feature type="modified residue" description="Phosphoserine" evidence="13 14">
    <location>
        <position position="779"/>
    </location>
</feature>
<feature type="modified residue" description="Phosphoserine" evidence="13 14 17">
    <location>
        <position position="782"/>
    </location>
</feature>
<feature type="modified residue" description="Phosphoserine" evidence="14 16 17 18">
    <location>
        <position position="796"/>
    </location>
</feature>
<feature type="modified residue" description="Phosphoserine" evidence="14 18">
    <location>
        <position position="811"/>
    </location>
</feature>
<feature type="cross-link" description="Glycyl lysine isopeptide (Lys-Gly) (interchain with G-Cter in SUMO2)" evidence="20">
    <location>
        <position position="123"/>
    </location>
</feature>
<feature type="cross-link" description="Glycyl lysine isopeptide (Lys-Gly) (interchain with G-Cter in SUMO2)" evidence="19 20">
    <location>
        <position position="427"/>
    </location>
</feature>
<feature type="cross-link" description="Glycyl lysine isopeptide (Lys-Gly) (interchain with G-Cter in SUMO2)" evidence="20">
    <location>
        <position position="676"/>
    </location>
</feature>
<feature type="sequence conflict" description="In Ref. 4; BAB14503." evidence="6" ref="4">
    <original>F</original>
    <variation>L</variation>
    <location>
        <position position="116"/>
    </location>
</feature>
<feature type="sequence conflict" description="In Ref. 4; BAB14111." evidence="6" ref="4">
    <original>D</original>
    <variation>N</variation>
    <location>
        <position position="125"/>
    </location>
</feature>
<feature type="sequence conflict" description="In Ref. 4; BAB14111." evidence="6" ref="4">
    <original>M</original>
    <variation>T</variation>
    <location>
        <position position="250"/>
    </location>
</feature>
<feature type="sequence conflict" description="In Ref. 4; BAB14503." evidence="6" ref="4">
    <original>T</original>
    <variation>I</variation>
    <location>
        <position position="279"/>
    </location>
</feature>
<feature type="sequence conflict" description="In Ref. 4; BAB14111." evidence="6" ref="4">
    <original>A</original>
    <variation>T</variation>
    <location>
        <position position="393"/>
    </location>
</feature>
<feature type="sequence conflict" description="In Ref. 4; BAB14126." evidence="6" ref="4">
    <original>S</original>
    <variation>T</variation>
    <location>
        <position position="479"/>
    </location>
</feature>
<feature type="sequence conflict" description="In Ref. 4; BAB14126." evidence="6" ref="4">
    <original>L</original>
    <variation>H</variation>
    <location>
        <position position="733"/>
    </location>
</feature>
<comment type="function">
    <text evidence="3 5">Ribosome biogenesis factor. Part of the small subunit (SSU) processome, first precursor of the small eukaryotic ribosomal subunit. During the assembly of the SSU processome in the nucleolus, many ribosome biogenesis factors, an RNA chaperone and ribosomal proteins associate with the nascent pre-rRNA and work in concert to generate RNA folding, modifications, rearrangements and cleavage as well as targeted degradation of pre-ribosomal RNA by the RNA exosome. Involved in nucleolar processing of pre-18S ribosomal RNA. Required for optimal pre-ribosomal RNA transcription by RNA polymerase I.</text>
</comment>
<comment type="subunit">
    <text evidence="5 7 8">Component of the proposed t-UTP subcomplex of the ribosomal small subunit (SSU) processome. SSU processome is composed of more than 70 proteins and the RNA chaperone small nucleolar RNA (snoRNA) U3 (PubMed:17699751, PubMed:22916032).</text>
</comment>
<comment type="interaction">
    <interactant intactId="EBI-2515097">
        <id>Q8IWA0</id>
    </interactant>
    <interactant intactId="EBI-2565501">
        <id>P08567</id>
        <label>PLEK</label>
    </interactant>
    <organismsDiffer>false</organismsDiffer>
    <experiments>2</experiments>
</comment>
<comment type="subcellular location">
    <subcellularLocation>
        <location evidence="2 4 5">Nucleus</location>
        <location evidence="2 4 5">Nucleolus</location>
    </subcellularLocation>
</comment>
<comment type="sequence caution" evidence="6">
    <conflict type="erroneous initiation">
        <sequence resource="EMBL-CDS" id="BAB14503"/>
    </conflict>
    <text>Truncated N-terminus.</text>
</comment>